<evidence type="ECO:0000250" key="1"/>
<evidence type="ECO:0000250" key="2">
    <source>
        <dbReference type="UniProtKB" id="P30288"/>
    </source>
</evidence>
<evidence type="ECO:0000255" key="3"/>
<evidence type="ECO:0000269" key="4">
    <source>
    </source>
</evidence>
<evidence type="ECO:0000269" key="5">
    <source>
    </source>
</evidence>
<evidence type="ECO:0000269" key="6">
    <source>
    </source>
</evidence>
<evidence type="ECO:0000269" key="7">
    <source>
    </source>
</evidence>
<evidence type="ECO:0000269" key="8">
    <source ref="4"/>
</evidence>
<evidence type="ECO:0000305" key="9"/>
<evidence type="ECO:0000305" key="10">
    <source>
    </source>
</evidence>
<evidence type="ECO:0000305" key="11">
    <source>
    </source>
</evidence>
<evidence type="ECO:0007829" key="12">
    <source>
        <dbReference type="PDB" id="1AGG"/>
    </source>
</evidence>
<sequence>MKLCMTLLITAIAVVTFVVATQEESAEFNEVEESREDNCIAEDYGKCTWGGTKCCRGRPCRCSMIGTNCECTPRLIMEGLSFA</sequence>
<organism>
    <name type="scientific">Agelenopsis aperta</name>
    <name type="common">North American funnel-web spider</name>
    <name type="synonym">Agelenopsis gertschi</name>
    <dbReference type="NCBI Taxonomy" id="6908"/>
    <lineage>
        <taxon>Eukaryota</taxon>
        <taxon>Metazoa</taxon>
        <taxon>Ecdysozoa</taxon>
        <taxon>Arthropoda</taxon>
        <taxon>Chelicerata</taxon>
        <taxon>Arachnida</taxon>
        <taxon>Araneae</taxon>
        <taxon>Araneomorphae</taxon>
        <taxon>Entelegynae</taxon>
        <taxon>Agelenidae</taxon>
        <taxon>Agelenopsis</taxon>
    </lineage>
</organism>
<comment type="function">
    <text evidence="7">Antagonist of voltage-gated Cav2.1/CACNA1A (P-type) calcium channels. Paralyzes insect by blocking neuromuscular transmission.</text>
</comment>
<comment type="subcellular location">
    <subcellularLocation>
        <location evidence="6 7">Secreted</location>
    </subcellularLocation>
</comment>
<comment type="tissue specificity">
    <text evidence="10 11">Expressed by the venom gland.</text>
</comment>
<comment type="domain">
    <text evidence="2">The presence of a 'disulfide through disulfide knot' structurally defines this protein as a knottin.</text>
</comment>
<comment type="PTM">
    <text>The toxin with D-Ser (named omega-aga IVC) is 80-90 fold more potent than that with L-Ser (omega-aga IVB) against Cav2.1/CACNA1A (P-type) channels in rat cerebellar Purkinje neurons and is more resistant to proteases. The epimerization is done by the venom peptide isomerase heterodimer.</text>
</comment>
<comment type="similarity">
    <text evidence="9">Belongs to the neurotoxin 02 (plectoxin) family. 03 (omega-agtx) subfamily.</text>
</comment>
<keyword id="KW-0002">3D-structure</keyword>
<keyword id="KW-0108">Calcium channel impairing toxin</keyword>
<keyword id="KW-0208">D-amino acid</keyword>
<keyword id="KW-0903">Direct protein sequencing</keyword>
<keyword id="KW-1015">Disulfide bond</keyword>
<keyword id="KW-0872">Ion channel impairing toxin</keyword>
<keyword id="KW-0960">Knottin</keyword>
<keyword id="KW-0528">Neurotoxin</keyword>
<keyword id="KW-0638">Presynaptic neurotoxin</keyword>
<keyword id="KW-0964">Secreted</keyword>
<keyword id="KW-0732">Signal</keyword>
<keyword id="KW-0800">Toxin</keyword>
<keyword id="KW-1218">Voltage-gated calcium channel impairing toxin</keyword>
<feature type="signal peptide" evidence="3">
    <location>
        <begin position="1"/>
        <end position="20"/>
    </location>
</feature>
<feature type="propeptide" id="PRO_0000035490" evidence="1">
    <location>
        <begin position="21"/>
        <end position="35"/>
    </location>
</feature>
<feature type="chain" id="PRO_0000035491" description="Omega-agatoxin-Aa4b">
    <location>
        <begin position="36"/>
        <end position="83"/>
    </location>
</feature>
<feature type="modified residue" description="D-serine (Ser)" evidence="4 5 8">
    <location>
        <position position="81"/>
    </location>
</feature>
<feature type="disulfide bond">
    <location>
        <begin position="39"/>
        <end position="55"/>
    </location>
</feature>
<feature type="disulfide bond">
    <location>
        <begin position="47"/>
        <end position="60"/>
    </location>
</feature>
<feature type="disulfide bond">
    <location>
        <begin position="54"/>
        <end position="71"/>
    </location>
</feature>
<feature type="disulfide bond">
    <location>
        <begin position="62"/>
        <end position="69"/>
    </location>
</feature>
<feature type="strand" evidence="12">
    <location>
        <begin position="49"/>
        <end position="51"/>
    </location>
</feature>
<feature type="turn" evidence="12">
    <location>
        <begin position="55"/>
        <end position="57"/>
    </location>
</feature>
<feature type="strand" evidence="12">
    <location>
        <begin position="60"/>
        <end position="62"/>
    </location>
</feature>
<feature type="strand" evidence="12">
    <location>
        <begin position="64"/>
        <end position="71"/>
    </location>
</feature>
<feature type="turn" evidence="12">
    <location>
        <begin position="76"/>
        <end position="79"/>
    </location>
</feature>
<name>TX23B_AGEAP</name>
<accession>P37045</accession>
<protein>
    <recommendedName>
        <fullName evidence="9">Omega-agatoxin-Aa4b</fullName>
        <shortName evidence="9">Omega-AGTX-Aa4b</shortName>
    </recommendedName>
    <alternativeName>
        <fullName>Omega-agatoxin IVB</fullName>
        <shortName>Omega-Aga-IVB</shortName>
    </alternativeName>
    <alternativeName>
        <fullName>Omega-agatoxin IVC</fullName>
        <shortName>Omega-Aga-IVC</shortName>
    </alternativeName>
    <alternativeName>
        <fullName>Omega-agatoxin tsukuba</fullName>
        <shortName>Omega-Aga-TK</shortName>
        <shortName>Omega-agatoxin-TK</shortName>
    </alternativeName>
    <alternativeName>
        <fullName>Omega-agatoxin-4B</fullName>
    </alternativeName>
</protein>
<proteinExistence type="evidence at protein level"/>
<reference key="1">
    <citation type="submission" date="1994-10" db="EMBL/GenBank/DDBJ databases">
        <authorList>
            <person name="Heck S.D."/>
            <person name="Siok C.J."/>
            <person name="Krapcho K.J."/>
        </authorList>
    </citation>
    <scope>NUCLEOTIDE SEQUENCE [MRNA]</scope>
</reference>
<reference key="2">
    <citation type="journal article" date="1993" name="Mol. Pharmacol.">
        <title>Structure and properties of omega-agatoxin IVB, a new antagonist of P-type calcium channels.</title>
        <authorList>
            <person name="Adams M.E."/>
            <person name="Mintz I.M."/>
            <person name="Reily M.D."/>
            <person name="Thanabal V."/>
            <person name="Bean B.P."/>
        </authorList>
    </citation>
    <scope>PROTEIN SEQUENCE OF 36-83</scope>
    <scope>FUNCTION</scope>
    <scope>STRUCTURE BY NMR OF 36-83</scope>
    <scope>DISULFIDE BONDS</scope>
    <scope>SUBCELLULAR LOCATION</scope>
    <source>
        <tissue>Venom</tissue>
    </source>
</reference>
<reference key="3">
    <citation type="journal article" date="1993" name="Biochem. Biophys. Res. Commun.">
        <title>A novel peptide from funnel web spider venom, omega-Aga-TK, selectively blocks, P-type calcium channels.</title>
        <authorList>
            <person name="Teramoto T."/>
            <person name="Kuwada M."/>
            <person name="Niidome T."/>
            <person name="Sawada K."/>
            <person name="Nishizawa Y."/>
            <person name="Katayama K."/>
        </authorList>
    </citation>
    <scope>PROTEIN SEQUENCE OF 36-83</scope>
    <scope>SUBCELLULAR LOCATION</scope>
    <source>
        <tissue>Venom</tissue>
    </source>
</reference>
<reference key="4">
    <citation type="journal article" date="1994" name="J. Am. Chem. Soc.">
        <title>Disulfide bond assignment of omega-agatoxins IVB and IVC: discovery of a D-serine residue in omega-agatoxin IVB.</title>
        <authorList>
            <person name="Heck S.D."/>
            <person name="Kelbaugh P.R."/>
            <person name="Kelly M.E."/>
            <person name="Thadeio P.F."/>
            <person name="Saccomano N.A."/>
            <person name="Stroh J.G."/>
            <person name="Volkmann R.A."/>
        </authorList>
    </citation>
    <scope>DISULFIDE BONDS</scope>
    <scope>D-AMINO ACID AT SER-81</scope>
</reference>
<reference key="5">
    <citation type="journal article" date="1994" name="Science">
        <title>Functional consequences of posttranslational isomerization of Ser46 in a calcium channel toxin.</title>
        <authorList>
            <person name="Heck S.D."/>
            <person name="Siok C.J."/>
            <person name="Krapcho K.J."/>
            <person name="Kelbaugh P.R."/>
            <person name="Thadeio P.F."/>
            <person name="Welch M.J."/>
            <person name="Williams R.D."/>
            <person name="Ganong A.H."/>
            <person name="Kelly M.E."/>
            <person name="Lanzetti A.J."/>
        </authorList>
    </citation>
    <scope>D-AMINO ACID AT SER-81</scope>
    <scope>CHARACTERIZATION OF D- AND L- FORMS</scope>
</reference>
<reference key="6">
    <citation type="journal article" date="1994" name="Mol. Pharmacol.">
        <title>Omega-agatoxin-TK containing D-serine at position 46, but not synthetic omega-[L-Ser46]agatoxin-TK, exerts blockade of P-type calcium channels in cerebellar Purkinje neurons.</title>
        <authorList>
            <person name="Kuwada M."/>
            <person name="Teramoto T."/>
            <person name="Kumagaye K.Y."/>
            <person name="Nakajima K."/>
            <person name="Watanabe T."/>
            <person name="Kawai T."/>
            <person name="Kawakami Y."/>
            <person name="Niidome T."/>
            <person name="Sawada K."/>
            <person name="Nishizawa Y."/>
        </authorList>
    </citation>
    <scope>D-AMINO ACID AT SER-81</scope>
    <scope>CHARACTERIZATION OF D- AND L- FORMS</scope>
</reference>
<reference key="7">
    <citation type="journal article" date="1993" name="Biochemistry">
        <title>Sequential assignment and structure determination of spider toxin omega-Aga-IVB.</title>
        <authorList>
            <person name="Yu H."/>
            <person name="Rosen M.K."/>
            <person name="Saccomano N.A."/>
            <person name="Phillips D."/>
            <person name="Volkmann R.A."/>
            <person name="Schreiber S.L."/>
        </authorList>
    </citation>
    <scope>STRUCTURE BY NMR OF 36-83</scope>
    <scope>DISULFIDE BONDS</scope>
</reference>
<reference key="8">
    <citation type="journal article" date="1995" name="J. Biomol. NMR">
        <title>The solution structure of omega-Aga-IVB, a P-type calcium channel antagonist from venom of the funnel web spider, Agelenopsis aperta.</title>
        <authorList>
            <person name="Reily M.D."/>
            <person name="Thanabal V."/>
            <person name="Adams M.E."/>
        </authorList>
    </citation>
    <scope>STRUCTURE BY NMR OF 36-83</scope>
    <scope>DISULFIDE BONDS</scope>
</reference>
<dbReference type="EMBL" id="U15925">
    <property type="protein sequence ID" value="AAA57116.1"/>
    <property type="molecule type" value="mRNA"/>
</dbReference>
<dbReference type="PIR" id="A44664">
    <property type="entry name" value="A44664"/>
</dbReference>
<dbReference type="PDB" id="1AGG">
    <property type="method" value="NMR"/>
    <property type="chains" value="A=36-83"/>
</dbReference>
<dbReference type="PDB" id="1OMA">
    <property type="method" value="NMR"/>
    <property type="chains" value="A=36-83"/>
</dbReference>
<dbReference type="PDB" id="1OMB">
    <property type="method" value="NMR"/>
    <property type="chains" value="A=36-83"/>
</dbReference>
<dbReference type="PDBsum" id="1AGG"/>
<dbReference type="PDBsum" id="1OMA"/>
<dbReference type="PDBsum" id="1OMB"/>
<dbReference type="SMR" id="P37045"/>
<dbReference type="ArachnoServer" id="AS000183">
    <property type="toxin name" value="omega-agatoxin-Aa4b"/>
</dbReference>
<dbReference type="EvolutionaryTrace" id="P37045"/>
<dbReference type="GO" id="GO:0005576">
    <property type="term" value="C:extracellular region"/>
    <property type="evidence" value="ECO:0007669"/>
    <property type="project" value="UniProtKB-SubCell"/>
</dbReference>
<dbReference type="GO" id="GO:0044231">
    <property type="term" value="C:host cell presynaptic membrane"/>
    <property type="evidence" value="ECO:0007669"/>
    <property type="project" value="UniProtKB-KW"/>
</dbReference>
<dbReference type="GO" id="GO:0005246">
    <property type="term" value="F:calcium channel regulator activity"/>
    <property type="evidence" value="ECO:0007669"/>
    <property type="project" value="UniProtKB-KW"/>
</dbReference>
<dbReference type="GO" id="GO:0008200">
    <property type="term" value="F:ion channel inhibitor activity"/>
    <property type="evidence" value="ECO:0007669"/>
    <property type="project" value="InterPro"/>
</dbReference>
<dbReference type="GO" id="GO:0090729">
    <property type="term" value="F:toxin activity"/>
    <property type="evidence" value="ECO:0007669"/>
    <property type="project" value="UniProtKB-KW"/>
</dbReference>
<dbReference type="CDD" id="cd12960">
    <property type="entry name" value="Spider_toxin"/>
    <property type="match status" value="1"/>
</dbReference>
<dbReference type="Gene3D" id="4.10.40.10">
    <property type="match status" value="1"/>
</dbReference>
<dbReference type="InterPro" id="IPR004169">
    <property type="entry name" value="Spidertoxin"/>
</dbReference>
<dbReference type="Pfam" id="PF02819">
    <property type="entry name" value="Toxin_9"/>
    <property type="match status" value="1"/>
</dbReference>
<dbReference type="SUPFAM" id="SSF57059">
    <property type="entry name" value="omega toxin-like"/>
    <property type="match status" value="1"/>
</dbReference>